<comment type="similarity">
    <text evidence="2">To M.leprae ML2432 and S.coelicolor SCO3347.</text>
</comment>
<accession>P9WKU1</accession>
<accession>L0T6N6</accession>
<accession>P64717</accession>
<accession>Q11163</accession>
<proteinExistence type="evidence at protein level"/>
<dbReference type="EMBL" id="AL123456">
    <property type="protein sequence ID" value="CCP43233.1"/>
    <property type="molecule type" value="Genomic_DNA"/>
</dbReference>
<dbReference type="PIR" id="E70745">
    <property type="entry name" value="E70745"/>
</dbReference>
<dbReference type="RefSeq" id="NP_215012.1">
    <property type="nucleotide sequence ID" value="NC_000962.3"/>
</dbReference>
<dbReference type="RefSeq" id="WP_003402432.1">
    <property type="nucleotide sequence ID" value="NZ_NVQJ01000002.1"/>
</dbReference>
<dbReference type="SMR" id="P9WKU1"/>
<dbReference type="STRING" id="83332.Rv0498"/>
<dbReference type="PaxDb" id="83332-Rv0498"/>
<dbReference type="DNASU" id="887238"/>
<dbReference type="GeneID" id="887238"/>
<dbReference type="KEGG" id="mtu:Rv0498"/>
<dbReference type="KEGG" id="mtv:RVBD_0498"/>
<dbReference type="TubercuList" id="Rv0498"/>
<dbReference type="eggNOG" id="COG1082">
    <property type="taxonomic scope" value="Bacteria"/>
</dbReference>
<dbReference type="InParanoid" id="P9WKU1"/>
<dbReference type="OrthoDB" id="3248123at2"/>
<dbReference type="PhylomeDB" id="P9WKU1"/>
<dbReference type="Proteomes" id="UP000001584">
    <property type="component" value="Chromosome"/>
</dbReference>
<dbReference type="Gene3D" id="3.20.20.150">
    <property type="entry name" value="Divalent-metal-dependent TIM barrel enzymes"/>
    <property type="match status" value="1"/>
</dbReference>
<dbReference type="InterPro" id="IPR050312">
    <property type="entry name" value="IolE/XylAMocC-like"/>
</dbReference>
<dbReference type="InterPro" id="IPR036237">
    <property type="entry name" value="Xyl_isomerase-like_sf"/>
</dbReference>
<dbReference type="InterPro" id="IPR013022">
    <property type="entry name" value="Xyl_isomerase-like_TIM-brl"/>
</dbReference>
<dbReference type="PANTHER" id="PTHR12110:SF47">
    <property type="match status" value="1"/>
</dbReference>
<dbReference type="PANTHER" id="PTHR12110">
    <property type="entry name" value="HYDROXYPYRUVATE ISOMERASE"/>
    <property type="match status" value="1"/>
</dbReference>
<dbReference type="Pfam" id="PF01261">
    <property type="entry name" value="AP_endonuc_2"/>
    <property type="match status" value="1"/>
</dbReference>
<dbReference type="SUPFAM" id="SSF51658">
    <property type="entry name" value="Xylose isomerase-like"/>
    <property type="match status" value="1"/>
</dbReference>
<evidence type="ECO:0000255" key="1"/>
<evidence type="ECO:0000305" key="2"/>
<organism>
    <name type="scientific">Mycobacterium tuberculosis (strain ATCC 25618 / H37Rv)</name>
    <dbReference type="NCBI Taxonomy" id="83332"/>
    <lineage>
        <taxon>Bacteria</taxon>
        <taxon>Bacillati</taxon>
        <taxon>Actinomycetota</taxon>
        <taxon>Actinomycetes</taxon>
        <taxon>Mycobacteriales</taxon>
        <taxon>Mycobacteriaceae</taxon>
        <taxon>Mycobacterium</taxon>
        <taxon>Mycobacterium tuberculosis complex</taxon>
    </lineage>
</organism>
<sequence>MRPAIKVGLSTASVYPLRAEAAFEYADRLGYDGVELMVWGESVSQDIDAVRKLSRRYRVPVLSVHAPCLLISQRVWGANPILKLDRSVRAAEQLGAQTVVVHPPFRWQRRYAEGFSDQVAALEAASTVMVAVENMFPFRADRFFGAGQSRERMRKRGGGPGPAISAFAPSYDPLDGNHAHYTLDLSHTATAGTDSLDMARRMGPGLVHLHLCDGSGLPADEHLVPGRGTQPTAEVCQMLAGSGFVGHVVLEVSTSSARSANERESMLAESLQFARTHLLR</sequence>
<reference key="1">
    <citation type="journal article" date="1998" name="Nature">
        <title>Deciphering the biology of Mycobacterium tuberculosis from the complete genome sequence.</title>
        <authorList>
            <person name="Cole S.T."/>
            <person name="Brosch R."/>
            <person name="Parkhill J."/>
            <person name="Garnier T."/>
            <person name="Churcher C.M."/>
            <person name="Harris D.E."/>
            <person name="Gordon S.V."/>
            <person name="Eiglmeier K."/>
            <person name="Gas S."/>
            <person name="Barry C.E. III"/>
            <person name="Tekaia F."/>
            <person name="Badcock K."/>
            <person name="Basham D."/>
            <person name="Brown D."/>
            <person name="Chillingworth T."/>
            <person name="Connor R."/>
            <person name="Davies R.M."/>
            <person name="Devlin K."/>
            <person name="Feltwell T."/>
            <person name="Gentles S."/>
            <person name="Hamlin N."/>
            <person name="Holroyd S."/>
            <person name="Hornsby T."/>
            <person name="Jagels K."/>
            <person name="Krogh A."/>
            <person name="McLean J."/>
            <person name="Moule S."/>
            <person name="Murphy L.D."/>
            <person name="Oliver S."/>
            <person name="Osborne J."/>
            <person name="Quail M.A."/>
            <person name="Rajandream M.A."/>
            <person name="Rogers J."/>
            <person name="Rutter S."/>
            <person name="Seeger K."/>
            <person name="Skelton S."/>
            <person name="Squares S."/>
            <person name="Squares R."/>
            <person name="Sulston J.E."/>
            <person name="Taylor K."/>
            <person name="Whitehead S."/>
            <person name="Barrell B.G."/>
        </authorList>
    </citation>
    <scope>NUCLEOTIDE SEQUENCE [LARGE SCALE GENOMIC DNA]</scope>
    <source>
        <strain>ATCC 25618 / H37Rv</strain>
    </source>
</reference>
<reference key="2">
    <citation type="journal article" date="2011" name="Mol. Cell. Proteomics">
        <title>Proteogenomic analysis of Mycobacterium tuberculosis by high resolution mass spectrometry.</title>
        <authorList>
            <person name="Kelkar D.S."/>
            <person name="Kumar D."/>
            <person name="Kumar P."/>
            <person name="Balakrishnan L."/>
            <person name="Muthusamy B."/>
            <person name="Yadav A.K."/>
            <person name="Shrivastava P."/>
            <person name="Marimuthu A."/>
            <person name="Anand S."/>
            <person name="Sundaram H."/>
            <person name="Kingsbury R."/>
            <person name="Harsha H.C."/>
            <person name="Nair B."/>
            <person name="Prasad T.S."/>
            <person name="Chauhan D.S."/>
            <person name="Katoch K."/>
            <person name="Katoch V.M."/>
            <person name="Kumar P."/>
            <person name="Chaerkady R."/>
            <person name="Ramachandran S."/>
            <person name="Dash D."/>
            <person name="Pandey A."/>
        </authorList>
    </citation>
    <scope>IDENTIFICATION BY MASS SPECTROMETRY [LARGE SCALE ANALYSIS]</scope>
    <source>
        <strain>ATCC 25618 / H37Rv</strain>
    </source>
</reference>
<keyword id="KW-1185">Reference proteome</keyword>
<keyword id="KW-0732">Signal</keyword>
<gene>
    <name type="ordered locus">Rv0498</name>
    <name type="ORF">MTCY20G9.24</name>
</gene>
<feature type="signal peptide" evidence="1">
    <location>
        <begin position="1"/>
        <end position="21"/>
    </location>
</feature>
<feature type="chain" id="PRO_0000014076" description="Uncharacterized protein Rv0498">
    <location>
        <begin position="22"/>
        <end position="280"/>
    </location>
</feature>
<protein>
    <recommendedName>
        <fullName>Uncharacterized protein Rv0498</fullName>
    </recommendedName>
</protein>
<name>Y498_MYCTU</name>